<comment type="function">
    <text evidence="2">Component of the ubiquinol-cytochrome c reductase complex (complex III or cytochrome b-c1 complex) that is part of the mitochondrial respiratory chain. The b-c1 complex mediates electron transfer from ubiquinol to cytochrome c. Contributes to the generation of a proton gradient across the mitochondrial membrane that is then used for ATP synthesis.</text>
</comment>
<comment type="cofactor">
    <cofactor evidence="2">
        <name>heme b</name>
        <dbReference type="ChEBI" id="CHEBI:60344"/>
    </cofactor>
    <text evidence="2">Binds 2 heme b groups non-covalently.</text>
</comment>
<comment type="subunit">
    <text evidence="2">The cytochrome bc1 complex contains 11 subunits: 3 respiratory subunits (MT-CYB, CYC1 and UQCRFS1), 2 core proteins (UQCRC1 and UQCRC2) and 6 low-molecular weight proteins (UQCRH/QCR6, UQCRB/QCR7, UQCRQ/QCR8, UQCR10/QCR9, UQCR11/QCR10 and a cleavage product of UQCRFS1). This cytochrome bc1 complex then forms a dimer.</text>
</comment>
<comment type="subcellular location">
    <subcellularLocation>
        <location evidence="2">Mitochondrion inner membrane</location>
        <topology evidence="2">Multi-pass membrane protein</topology>
    </subcellularLocation>
</comment>
<comment type="miscellaneous">
    <text evidence="1">Heme 1 (or BL or b562) is low-potential and absorbs at about 562 nm, and heme 2 (or BH or b566) is high-potential and absorbs at about 566 nm.</text>
</comment>
<comment type="similarity">
    <text evidence="3 4">Belongs to the cytochrome b family.</text>
</comment>
<comment type="caution">
    <text evidence="2">The full-length protein contains only eight transmembrane helices, not nine as predicted by bioinformatics tools.</text>
</comment>
<keyword id="KW-0249">Electron transport</keyword>
<keyword id="KW-0349">Heme</keyword>
<keyword id="KW-0408">Iron</keyword>
<keyword id="KW-0472">Membrane</keyword>
<keyword id="KW-0479">Metal-binding</keyword>
<keyword id="KW-0496">Mitochondrion</keyword>
<keyword id="KW-0999">Mitochondrion inner membrane</keyword>
<keyword id="KW-0679">Respiratory chain</keyword>
<keyword id="KW-0812">Transmembrane</keyword>
<keyword id="KW-1133">Transmembrane helix</keyword>
<keyword id="KW-0813">Transport</keyword>
<keyword id="KW-0830">Ubiquinone</keyword>
<reference key="1">
    <citation type="journal article" date="2000" name="Proc. Natl. Acad. Sci. U.S.A.">
        <title>Remarkable species diversity in Malagasy mouse lemurs (primates, Microcebus).</title>
        <authorList>
            <person name="Yoder A.D."/>
            <person name="Rasoloarison R.M."/>
            <person name="Goodman S.M."/>
            <person name="Irwin J.A."/>
            <person name="Atsalis S."/>
            <person name="Ravosa M.J."/>
            <person name="Ganzhorn J.U."/>
        </authorList>
    </citation>
    <scope>NUCLEOTIDE SEQUENCE [GENOMIC DNA]</scope>
    <source>
        <strain>Isolate SMG-8747</strain>
        <strain>Isolate YLE190</strain>
    </source>
</reference>
<name>CYB_MICRF</name>
<organism>
    <name type="scientific">Microcebus rufus</name>
    <name type="common">Brown mouse lemur</name>
    <dbReference type="NCBI Taxonomy" id="122232"/>
    <lineage>
        <taxon>Eukaryota</taxon>
        <taxon>Metazoa</taxon>
        <taxon>Chordata</taxon>
        <taxon>Craniata</taxon>
        <taxon>Vertebrata</taxon>
        <taxon>Euteleostomi</taxon>
        <taxon>Mammalia</taxon>
        <taxon>Eutheria</taxon>
        <taxon>Euarchontoglires</taxon>
        <taxon>Primates</taxon>
        <taxon>Strepsirrhini</taxon>
        <taxon>Lemuriformes</taxon>
        <taxon>Cheirogaleidae</taxon>
        <taxon>Microcebus</taxon>
    </lineage>
</organism>
<gene>
    <name type="primary">MT-CYB</name>
    <name type="synonym">COB</name>
    <name type="synonym">CYTB</name>
    <name type="synonym">MTCYB</name>
</gene>
<proteinExistence type="inferred from homology"/>
<geneLocation type="mitochondrion"/>
<sequence length="379" mass="42588">MTNIRKTHPLMKIMNSSFIDLPAPSNISSWWNFGSLLGACLAIQIITGLFLAMHYTADTATAFSSVTHICRDVNQGWIIRYLHANGASMFFLCLFLHVGRGMYYGSFTLSETWNIGIILLFTVMATAFMGYVLPWGQMSFWGATVITNLLSAIPYIGTDLVEWIWGGFSVDKATLTRFFAFHFILPFIISALVMVHLLFLHETGSNNPLGTSSESDKIPFHPYYTIKDLLGLMFLLLTLTILVLFSPDLLGDPDNYMPANPLSTPPHIKPEWYFLFAYAILRSIPNKLGGVLALIMSILILAIIPILQTAKQRSMMFRPLSQIMFWILTADLLTLTWIGGQPVEHPFVAIGQVASILYFSLILIIMPTVSLIENKMLKW</sequence>
<evidence type="ECO:0000250" key="1"/>
<evidence type="ECO:0000250" key="2">
    <source>
        <dbReference type="UniProtKB" id="P00157"/>
    </source>
</evidence>
<evidence type="ECO:0000255" key="3">
    <source>
        <dbReference type="PROSITE-ProRule" id="PRU00967"/>
    </source>
</evidence>
<evidence type="ECO:0000255" key="4">
    <source>
        <dbReference type="PROSITE-ProRule" id="PRU00968"/>
    </source>
</evidence>
<accession>Q9G1Z0</accession>
<dbReference type="EMBL" id="AF285552">
    <property type="protein sequence ID" value="AAG30697.1"/>
    <property type="molecule type" value="Genomic_DNA"/>
</dbReference>
<dbReference type="EMBL" id="AF285553">
    <property type="protein sequence ID" value="AAG30698.1"/>
    <property type="molecule type" value="Genomic_DNA"/>
</dbReference>
<dbReference type="SMR" id="Q9G1Z0"/>
<dbReference type="GO" id="GO:0005743">
    <property type="term" value="C:mitochondrial inner membrane"/>
    <property type="evidence" value="ECO:0007669"/>
    <property type="project" value="UniProtKB-SubCell"/>
</dbReference>
<dbReference type="GO" id="GO:0045275">
    <property type="term" value="C:respiratory chain complex III"/>
    <property type="evidence" value="ECO:0007669"/>
    <property type="project" value="InterPro"/>
</dbReference>
<dbReference type="GO" id="GO:0046872">
    <property type="term" value="F:metal ion binding"/>
    <property type="evidence" value="ECO:0007669"/>
    <property type="project" value="UniProtKB-KW"/>
</dbReference>
<dbReference type="GO" id="GO:0008121">
    <property type="term" value="F:ubiquinol-cytochrome-c reductase activity"/>
    <property type="evidence" value="ECO:0007669"/>
    <property type="project" value="InterPro"/>
</dbReference>
<dbReference type="GO" id="GO:0006122">
    <property type="term" value="P:mitochondrial electron transport, ubiquinol to cytochrome c"/>
    <property type="evidence" value="ECO:0007669"/>
    <property type="project" value="TreeGrafter"/>
</dbReference>
<dbReference type="CDD" id="cd00290">
    <property type="entry name" value="cytochrome_b_C"/>
    <property type="match status" value="1"/>
</dbReference>
<dbReference type="CDD" id="cd00284">
    <property type="entry name" value="Cytochrome_b_N"/>
    <property type="match status" value="1"/>
</dbReference>
<dbReference type="FunFam" id="1.20.810.10:FF:000002">
    <property type="entry name" value="Cytochrome b"/>
    <property type="match status" value="1"/>
</dbReference>
<dbReference type="Gene3D" id="1.20.810.10">
    <property type="entry name" value="Cytochrome Bc1 Complex, Chain C"/>
    <property type="match status" value="1"/>
</dbReference>
<dbReference type="InterPro" id="IPR005798">
    <property type="entry name" value="Cyt_b/b6_C"/>
</dbReference>
<dbReference type="InterPro" id="IPR036150">
    <property type="entry name" value="Cyt_b/b6_C_sf"/>
</dbReference>
<dbReference type="InterPro" id="IPR005797">
    <property type="entry name" value="Cyt_b/b6_N"/>
</dbReference>
<dbReference type="InterPro" id="IPR027387">
    <property type="entry name" value="Cytb/b6-like_sf"/>
</dbReference>
<dbReference type="InterPro" id="IPR030689">
    <property type="entry name" value="Cytochrome_b"/>
</dbReference>
<dbReference type="InterPro" id="IPR048260">
    <property type="entry name" value="Cytochrome_b_C_euk/bac"/>
</dbReference>
<dbReference type="InterPro" id="IPR048259">
    <property type="entry name" value="Cytochrome_b_N_euk/bac"/>
</dbReference>
<dbReference type="InterPro" id="IPR016174">
    <property type="entry name" value="Di-haem_cyt_TM"/>
</dbReference>
<dbReference type="PANTHER" id="PTHR19271">
    <property type="entry name" value="CYTOCHROME B"/>
    <property type="match status" value="1"/>
</dbReference>
<dbReference type="PANTHER" id="PTHR19271:SF16">
    <property type="entry name" value="CYTOCHROME B"/>
    <property type="match status" value="1"/>
</dbReference>
<dbReference type="Pfam" id="PF00032">
    <property type="entry name" value="Cytochrom_B_C"/>
    <property type="match status" value="1"/>
</dbReference>
<dbReference type="Pfam" id="PF00033">
    <property type="entry name" value="Cytochrome_B"/>
    <property type="match status" value="1"/>
</dbReference>
<dbReference type="PIRSF" id="PIRSF038885">
    <property type="entry name" value="COB"/>
    <property type="match status" value="1"/>
</dbReference>
<dbReference type="SUPFAM" id="SSF81648">
    <property type="entry name" value="a domain/subunit of cytochrome bc1 complex (Ubiquinol-cytochrome c reductase)"/>
    <property type="match status" value="1"/>
</dbReference>
<dbReference type="SUPFAM" id="SSF81342">
    <property type="entry name" value="Transmembrane di-heme cytochromes"/>
    <property type="match status" value="1"/>
</dbReference>
<dbReference type="PROSITE" id="PS51003">
    <property type="entry name" value="CYTB_CTER"/>
    <property type="match status" value="1"/>
</dbReference>
<dbReference type="PROSITE" id="PS51002">
    <property type="entry name" value="CYTB_NTER"/>
    <property type="match status" value="1"/>
</dbReference>
<feature type="chain" id="PRO_0000061189" description="Cytochrome b">
    <location>
        <begin position="1"/>
        <end position="379"/>
    </location>
</feature>
<feature type="transmembrane region" description="Helical" evidence="2">
    <location>
        <begin position="33"/>
        <end position="53"/>
    </location>
</feature>
<feature type="transmembrane region" description="Helical" evidence="2">
    <location>
        <begin position="77"/>
        <end position="98"/>
    </location>
</feature>
<feature type="transmembrane region" description="Helical" evidence="2">
    <location>
        <begin position="113"/>
        <end position="133"/>
    </location>
</feature>
<feature type="transmembrane region" description="Helical" evidence="2">
    <location>
        <begin position="178"/>
        <end position="198"/>
    </location>
</feature>
<feature type="transmembrane region" description="Helical" evidence="2">
    <location>
        <begin position="226"/>
        <end position="246"/>
    </location>
</feature>
<feature type="transmembrane region" description="Helical" evidence="2">
    <location>
        <begin position="288"/>
        <end position="308"/>
    </location>
</feature>
<feature type="transmembrane region" description="Helical" evidence="2">
    <location>
        <begin position="320"/>
        <end position="340"/>
    </location>
</feature>
<feature type="transmembrane region" description="Helical" evidence="2">
    <location>
        <begin position="347"/>
        <end position="367"/>
    </location>
</feature>
<feature type="binding site" description="axial binding residue" evidence="2">
    <location>
        <position position="83"/>
    </location>
    <ligand>
        <name>heme b</name>
        <dbReference type="ChEBI" id="CHEBI:60344"/>
        <label>b562</label>
    </ligand>
    <ligandPart>
        <name>Fe</name>
        <dbReference type="ChEBI" id="CHEBI:18248"/>
    </ligandPart>
</feature>
<feature type="binding site" description="axial binding residue" evidence="2">
    <location>
        <position position="97"/>
    </location>
    <ligand>
        <name>heme b</name>
        <dbReference type="ChEBI" id="CHEBI:60344"/>
        <label>b566</label>
    </ligand>
    <ligandPart>
        <name>Fe</name>
        <dbReference type="ChEBI" id="CHEBI:18248"/>
    </ligandPart>
</feature>
<feature type="binding site" description="axial binding residue" evidence="2">
    <location>
        <position position="182"/>
    </location>
    <ligand>
        <name>heme b</name>
        <dbReference type="ChEBI" id="CHEBI:60344"/>
        <label>b562</label>
    </ligand>
    <ligandPart>
        <name>Fe</name>
        <dbReference type="ChEBI" id="CHEBI:18248"/>
    </ligandPart>
</feature>
<feature type="binding site" description="axial binding residue" evidence="2">
    <location>
        <position position="196"/>
    </location>
    <ligand>
        <name>heme b</name>
        <dbReference type="ChEBI" id="CHEBI:60344"/>
        <label>b566</label>
    </ligand>
    <ligandPart>
        <name>Fe</name>
        <dbReference type="ChEBI" id="CHEBI:18248"/>
    </ligandPart>
</feature>
<feature type="binding site" evidence="2">
    <location>
        <position position="201"/>
    </location>
    <ligand>
        <name>a ubiquinone</name>
        <dbReference type="ChEBI" id="CHEBI:16389"/>
    </ligand>
</feature>
<protein>
    <recommendedName>
        <fullName>Cytochrome b</fullName>
    </recommendedName>
    <alternativeName>
        <fullName>Complex III subunit 3</fullName>
    </alternativeName>
    <alternativeName>
        <fullName>Complex III subunit III</fullName>
    </alternativeName>
    <alternativeName>
        <fullName>Cytochrome b-c1 complex subunit 3</fullName>
    </alternativeName>
    <alternativeName>
        <fullName>Ubiquinol-cytochrome-c reductase complex cytochrome b subunit</fullName>
    </alternativeName>
</protein>